<feature type="chain" id="PRO_0000252649" description="Glucose-6-phosphate isomerase">
    <location>
        <begin position="1"/>
        <end position="443"/>
    </location>
</feature>
<feature type="active site" description="Proton donor" evidence="1">
    <location>
        <position position="285"/>
    </location>
</feature>
<feature type="active site" evidence="1">
    <location>
        <position position="306"/>
    </location>
</feature>
<feature type="active site" evidence="1">
    <location>
        <position position="420"/>
    </location>
</feature>
<protein>
    <recommendedName>
        <fullName evidence="1">Glucose-6-phosphate isomerase</fullName>
        <shortName evidence="1">GPI</shortName>
        <ecNumber evidence="1">5.3.1.9</ecNumber>
    </recommendedName>
    <alternativeName>
        <fullName evidence="1">Phosphoglucose isomerase</fullName>
        <shortName evidence="1">PGI</shortName>
    </alternativeName>
    <alternativeName>
        <fullName evidence="1">Phosphohexose isomerase</fullName>
        <shortName evidence="1">PHI</shortName>
    </alternativeName>
</protein>
<keyword id="KW-0963">Cytoplasm</keyword>
<keyword id="KW-0312">Gluconeogenesis</keyword>
<keyword id="KW-0324">Glycolysis</keyword>
<keyword id="KW-0413">Isomerase</keyword>
<proteinExistence type="inferred from homology"/>
<organism>
    <name type="scientific">Staphylococcus aureus (strain USA300)</name>
    <dbReference type="NCBI Taxonomy" id="367830"/>
    <lineage>
        <taxon>Bacteria</taxon>
        <taxon>Bacillati</taxon>
        <taxon>Bacillota</taxon>
        <taxon>Bacilli</taxon>
        <taxon>Bacillales</taxon>
        <taxon>Staphylococcaceae</taxon>
        <taxon>Staphylococcus</taxon>
    </lineage>
</organism>
<reference key="1">
    <citation type="journal article" date="2006" name="Lancet">
        <title>Complete genome sequence of USA300, an epidemic clone of community-acquired meticillin-resistant Staphylococcus aureus.</title>
        <authorList>
            <person name="Diep B.A."/>
            <person name="Gill S.R."/>
            <person name="Chang R.F."/>
            <person name="Phan T.H."/>
            <person name="Chen J.H."/>
            <person name="Davidson M.G."/>
            <person name="Lin F."/>
            <person name="Lin J."/>
            <person name="Carleton H.A."/>
            <person name="Mongodin E.F."/>
            <person name="Sensabaugh G.F."/>
            <person name="Perdreau-Remington F."/>
        </authorList>
    </citation>
    <scope>NUCLEOTIDE SEQUENCE [LARGE SCALE GENOMIC DNA]</scope>
    <source>
        <strain>USA300</strain>
    </source>
</reference>
<accession>Q2FIB3</accession>
<gene>
    <name evidence="1" type="primary">pgi</name>
    <name type="ordered locus">SAUSA300_0865</name>
</gene>
<comment type="function">
    <text evidence="1">Catalyzes the reversible isomerization of glucose-6-phosphate to fructose-6-phosphate.</text>
</comment>
<comment type="catalytic activity">
    <reaction evidence="1">
        <text>alpha-D-glucose 6-phosphate = beta-D-fructose 6-phosphate</text>
        <dbReference type="Rhea" id="RHEA:11816"/>
        <dbReference type="ChEBI" id="CHEBI:57634"/>
        <dbReference type="ChEBI" id="CHEBI:58225"/>
        <dbReference type="EC" id="5.3.1.9"/>
    </reaction>
</comment>
<comment type="pathway">
    <text evidence="1">Carbohydrate biosynthesis; gluconeogenesis.</text>
</comment>
<comment type="pathway">
    <text evidence="1">Carbohydrate degradation; glycolysis; D-glyceraldehyde 3-phosphate and glycerone phosphate from D-glucose: step 2/4.</text>
</comment>
<comment type="subcellular location">
    <subcellularLocation>
        <location evidence="1">Cytoplasm</location>
    </subcellularLocation>
</comment>
<comment type="similarity">
    <text evidence="1">Belongs to the GPI family.</text>
</comment>
<evidence type="ECO:0000255" key="1">
    <source>
        <dbReference type="HAMAP-Rule" id="MF_00473"/>
    </source>
</evidence>
<name>G6PI_STAA3</name>
<dbReference type="EC" id="5.3.1.9" evidence="1"/>
<dbReference type="EMBL" id="CP000255">
    <property type="protein sequence ID" value="ABD21785.1"/>
    <property type="molecule type" value="Genomic_DNA"/>
</dbReference>
<dbReference type="RefSeq" id="WP_000148855.1">
    <property type="nucleotide sequence ID" value="NZ_CP027476.1"/>
</dbReference>
<dbReference type="SMR" id="Q2FIB3"/>
<dbReference type="KEGG" id="saa:SAUSA300_0865"/>
<dbReference type="HOGENOM" id="CLU_037303_0_1_9"/>
<dbReference type="UniPathway" id="UPA00109">
    <property type="reaction ID" value="UER00181"/>
</dbReference>
<dbReference type="UniPathway" id="UPA00138"/>
<dbReference type="Proteomes" id="UP000001939">
    <property type="component" value="Chromosome"/>
</dbReference>
<dbReference type="GO" id="GO:0005829">
    <property type="term" value="C:cytosol"/>
    <property type="evidence" value="ECO:0007669"/>
    <property type="project" value="TreeGrafter"/>
</dbReference>
<dbReference type="GO" id="GO:0097367">
    <property type="term" value="F:carbohydrate derivative binding"/>
    <property type="evidence" value="ECO:0007669"/>
    <property type="project" value="InterPro"/>
</dbReference>
<dbReference type="GO" id="GO:0004347">
    <property type="term" value="F:glucose-6-phosphate isomerase activity"/>
    <property type="evidence" value="ECO:0007669"/>
    <property type="project" value="UniProtKB-UniRule"/>
</dbReference>
<dbReference type="GO" id="GO:0048029">
    <property type="term" value="F:monosaccharide binding"/>
    <property type="evidence" value="ECO:0007669"/>
    <property type="project" value="TreeGrafter"/>
</dbReference>
<dbReference type="GO" id="GO:0006094">
    <property type="term" value="P:gluconeogenesis"/>
    <property type="evidence" value="ECO:0007669"/>
    <property type="project" value="UniProtKB-UniRule"/>
</dbReference>
<dbReference type="GO" id="GO:0051156">
    <property type="term" value="P:glucose 6-phosphate metabolic process"/>
    <property type="evidence" value="ECO:0007669"/>
    <property type="project" value="TreeGrafter"/>
</dbReference>
<dbReference type="GO" id="GO:0006096">
    <property type="term" value="P:glycolytic process"/>
    <property type="evidence" value="ECO:0007669"/>
    <property type="project" value="UniProtKB-UniRule"/>
</dbReference>
<dbReference type="CDD" id="cd05015">
    <property type="entry name" value="SIS_PGI_1"/>
    <property type="match status" value="1"/>
</dbReference>
<dbReference type="CDD" id="cd05016">
    <property type="entry name" value="SIS_PGI_2"/>
    <property type="match status" value="1"/>
</dbReference>
<dbReference type="FunFam" id="3.40.50.10490:FF:000015">
    <property type="entry name" value="Glucose-6-phosphate isomerase"/>
    <property type="match status" value="1"/>
</dbReference>
<dbReference type="FunFam" id="3.40.50.10490:FF:000016">
    <property type="entry name" value="Glucose-6-phosphate isomerase"/>
    <property type="match status" value="1"/>
</dbReference>
<dbReference type="Gene3D" id="3.40.50.10490">
    <property type="entry name" value="Glucose-6-phosphate isomerase like protein, domain 1"/>
    <property type="match status" value="3"/>
</dbReference>
<dbReference type="HAMAP" id="MF_00473">
    <property type="entry name" value="G6P_isomerase"/>
    <property type="match status" value="1"/>
</dbReference>
<dbReference type="InterPro" id="IPR001672">
    <property type="entry name" value="G6P_Isomerase"/>
</dbReference>
<dbReference type="InterPro" id="IPR018189">
    <property type="entry name" value="Phosphoglucose_isomerase_CS"/>
</dbReference>
<dbReference type="InterPro" id="IPR046348">
    <property type="entry name" value="SIS_dom_sf"/>
</dbReference>
<dbReference type="InterPro" id="IPR035476">
    <property type="entry name" value="SIS_PGI_1"/>
</dbReference>
<dbReference type="InterPro" id="IPR035482">
    <property type="entry name" value="SIS_PGI_2"/>
</dbReference>
<dbReference type="NCBIfam" id="NF010697">
    <property type="entry name" value="PRK14097.1"/>
    <property type="match status" value="1"/>
</dbReference>
<dbReference type="PANTHER" id="PTHR11469">
    <property type="entry name" value="GLUCOSE-6-PHOSPHATE ISOMERASE"/>
    <property type="match status" value="1"/>
</dbReference>
<dbReference type="PANTHER" id="PTHR11469:SF1">
    <property type="entry name" value="GLUCOSE-6-PHOSPHATE ISOMERASE"/>
    <property type="match status" value="1"/>
</dbReference>
<dbReference type="Pfam" id="PF00342">
    <property type="entry name" value="PGI"/>
    <property type="match status" value="1"/>
</dbReference>
<dbReference type="PRINTS" id="PR00662">
    <property type="entry name" value="G6PISOMERASE"/>
</dbReference>
<dbReference type="SUPFAM" id="SSF53697">
    <property type="entry name" value="SIS domain"/>
    <property type="match status" value="1"/>
</dbReference>
<dbReference type="PROSITE" id="PS00765">
    <property type="entry name" value="P_GLUCOSE_ISOMERASE_1"/>
    <property type="match status" value="1"/>
</dbReference>
<dbReference type="PROSITE" id="PS00174">
    <property type="entry name" value="P_GLUCOSE_ISOMERASE_2"/>
    <property type="match status" value="1"/>
</dbReference>
<dbReference type="PROSITE" id="PS51463">
    <property type="entry name" value="P_GLUCOSE_ISOMERASE_3"/>
    <property type="match status" value="1"/>
</dbReference>
<sequence>MTHIQLDFSKTLEFFGEHELKQQQEIVKSIHKTIHEGTGAGSDFLGWVDLPVDYDKEEFSRIVEASKRIKENSDVLVVIGIGGSYLGARAAIEMLTSSFRNSNEYPEIVFVGNHLSSTYTKELVDYLADKDFSVNVISKSGTTTEPAVAFRLFKQLVEERYGKEEAQKRIFATTDKEKGALKQLATNEGYETFIVPDDVGGRYSVLTAVGLLPIATAGINIEAMMIGAAKAREELSSDKLEENIAYQYATIRNILYAKGYTTEMLINYEPSMQYFNEWWKQLFGESEGKDFKGIYPSSANYTTDLHSLGQYVQEGRRFLFETVVKVNHPKYDITIEKDSDDLDGLNYLAGKTIDEVNTKAFEGTLLAHTDGGVPNMVVNIPQLDEETFGYVVYFFELACAMSGYQLGVNPFNQPGVEAYKQNMFALLGKPGFEDLKKELEERL</sequence>